<evidence type="ECO:0000255" key="1">
    <source>
        <dbReference type="HAMAP-Rule" id="MF_01677"/>
    </source>
</evidence>
<reference key="1">
    <citation type="journal article" date="2010" name="J. Bacteriol.">
        <title>Genome sequence of the deep-rooted Yersinia pestis strain Angola reveals new insights into the evolution and pangenome of the plague bacterium.</title>
        <authorList>
            <person name="Eppinger M."/>
            <person name="Worsham P.L."/>
            <person name="Nikolich M.P."/>
            <person name="Riley D.R."/>
            <person name="Sebastian Y."/>
            <person name="Mou S."/>
            <person name="Achtman M."/>
            <person name="Lindler L.E."/>
            <person name="Ravel J."/>
        </authorList>
    </citation>
    <scope>NUCLEOTIDE SEQUENCE [LARGE SCALE GENOMIC DNA]</scope>
    <source>
        <strain>Angola</strain>
    </source>
</reference>
<proteinExistence type="inferred from homology"/>
<gene>
    <name evidence="1" type="primary">mtnB</name>
    <name type="ordered locus">YpAngola_A3331</name>
</gene>
<comment type="function">
    <text evidence="1">Catalyzes the dehydration of methylthioribulose-1-phosphate (MTRu-1-P) into 2,3-diketo-5-methylthiopentyl-1-phosphate (DK-MTP-1-P).</text>
</comment>
<comment type="catalytic activity">
    <reaction evidence="1">
        <text>5-(methylsulfanyl)-D-ribulose 1-phosphate = 5-methylsulfanyl-2,3-dioxopentyl phosphate + H2O</text>
        <dbReference type="Rhea" id="RHEA:15549"/>
        <dbReference type="ChEBI" id="CHEBI:15377"/>
        <dbReference type="ChEBI" id="CHEBI:58548"/>
        <dbReference type="ChEBI" id="CHEBI:58828"/>
        <dbReference type="EC" id="4.2.1.109"/>
    </reaction>
</comment>
<comment type="cofactor">
    <cofactor evidence="1">
        <name>Zn(2+)</name>
        <dbReference type="ChEBI" id="CHEBI:29105"/>
    </cofactor>
    <text evidence="1">Binds 1 zinc ion per subunit.</text>
</comment>
<comment type="pathway">
    <text evidence="1">Amino-acid biosynthesis; L-methionine biosynthesis via salvage pathway; L-methionine from S-methyl-5-thio-alpha-D-ribose 1-phosphate: step 2/6.</text>
</comment>
<comment type="similarity">
    <text evidence="1">Belongs to the aldolase class II family. MtnB subfamily.</text>
</comment>
<accession>A9R2Z8</accession>
<sequence length="222" mass="24585">MTENRQLGALLAACHWIGEKGWCPATGGNMSLRLDLAHCLITESGKDKGSLAAEDFLLVETANNHVPSGRTPSAETGLHTLLYRLYPEIQAVLHTHSVNATVLSRVERSNALVLQGYEMQKSLSGQRSHLDAVVIPIFDNDQDIPALAQRVAAYADNRPLQYGFLVRGHGLYCWGNSVVEARRHLEGLEFLFQCELQRRLFDVNSNVDVKPNVDVNPNVEAK</sequence>
<keyword id="KW-0028">Amino-acid biosynthesis</keyword>
<keyword id="KW-0456">Lyase</keyword>
<keyword id="KW-0479">Metal-binding</keyword>
<keyword id="KW-0486">Methionine biosynthesis</keyword>
<keyword id="KW-0862">Zinc</keyword>
<organism>
    <name type="scientific">Yersinia pestis bv. Antiqua (strain Angola)</name>
    <dbReference type="NCBI Taxonomy" id="349746"/>
    <lineage>
        <taxon>Bacteria</taxon>
        <taxon>Pseudomonadati</taxon>
        <taxon>Pseudomonadota</taxon>
        <taxon>Gammaproteobacteria</taxon>
        <taxon>Enterobacterales</taxon>
        <taxon>Yersiniaceae</taxon>
        <taxon>Yersinia</taxon>
    </lineage>
</organism>
<name>MTNB_YERPG</name>
<protein>
    <recommendedName>
        <fullName evidence="1">Methylthioribulose-1-phosphate dehydratase</fullName>
        <shortName evidence="1">MTRu-1-P dehydratase</shortName>
        <ecNumber evidence="1">4.2.1.109</ecNumber>
    </recommendedName>
</protein>
<dbReference type="EC" id="4.2.1.109" evidence="1"/>
<dbReference type="EMBL" id="CP000901">
    <property type="protein sequence ID" value="ABX87627.1"/>
    <property type="molecule type" value="Genomic_DNA"/>
</dbReference>
<dbReference type="RefSeq" id="WP_011906393.1">
    <property type="nucleotide sequence ID" value="NZ_CP009935.1"/>
</dbReference>
<dbReference type="SMR" id="A9R2Z8"/>
<dbReference type="KEGG" id="ypg:YpAngola_A3331"/>
<dbReference type="PATRIC" id="fig|349746.12.peg.30"/>
<dbReference type="UniPathway" id="UPA00904">
    <property type="reaction ID" value="UER00875"/>
</dbReference>
<dbReference type="GO" id="GO:0005737">
    <property type="term" value="C:cytoplasm"/>
    <property type="evidence" value="ECO:0007669"/>
    <property type="project" value="InterPro"/>
</dbReference>
<dbReference type="GO" id="GO:0046570">
    <property type="term" value="F:methylthioribulose 1-phosphate dehydratase activity"/>
    <property type="evidence" value="ECO:0007669"/>
    <property type="project" value="UniProtKB-UniRule"/>
</dbReference>
<dbReference type="GO" id="GO:0008270">
    <property type="term" value="F:zinc ion binding"/>
    <property type="evidence" value="ECO:0007669"/>
    <property type="project" value="UniProtKB-UniRule"/>
</dbReference>
<dbReference type="GO" id="GO:0019509">
    <property type="term" value="P:L-methionine salvage from methylthioadenosine"/>
    <property type="evidence" value="ECO:0007669"/>
    <property type="project" value="UniProtKB-UniRule"/>
</dbReference>
<dbReference type="GO" id="GO:0005996">
    <property type="term" value="P:monosaccharide metabolic process"/>
    <property type="evidence" value="ECO:0007669"/>
    <property type="project" value="UniProtKB-ARBA"/>
</dbReference>
<dbReference type="Gene3D" id="3.40.225.10">
    <property type="entry name" value="Class II aldolase/adducin N-terminal domain"/>
    <property type="match status" value="1"/>
</dbReference>
<dbReference type="HAMAP" id="MF_01677">
    <property type="entry name" value="Salvage_MtnB"/>
    <property type="match status" value="1"/>
</dbReference>
<dbReference type="InterPro" id="IPR001303">
    <property type="entry name" value="Aldolase_II/adducin_N"/>
</dbReference>
<dbReference type="InterPro" id="IPR036409">
    <property type="entry name" value="Aldolase_II/adducin_N_sf"/>
</dbReference>
<dbReference type="InterPro" id="IPR017714">
    <property type="entry name" value="MethylthioRu-1-P_deHdtase_MtnB"/>
</dbReference>
<dbReference type="NCBIfam" id="NF006672">
    <property type="entry name" value="PRK09220.1"/>
    <property type="match status" value="1"/>
</dbReference>
<dbReference type="NCBIfam" id="TIGR03328">
    <property type="entry name" value="salvage_mtnB"/>
    <property type="match status" value="1"/>
</dbReference>
<dbReference type="PANTHER" id="PTHR10640">
    <property type="entry name" value="METHYLTHIORIBULOSE-1-PHOSPHATE DEHYDRATASE"/>
    <property type="match status" value="1"/>
</dbReference>
<dbReference type="PANTHER" id="PTHR10640:SF7">
    <property type="entry name" value="METHYLTHIORIBULOSE-1-PHOSPHATE DEHYDRATASE"/>
    <property type="match status" value="1"/>
</dbReference>
<dbReference type="Pfam" id="PF00596">
    <property type="entry name" value="Aldolase_II"/>
    <property type="match status" value="1"/>
</dbReference>
<dbReference type="SMART" id="SM01007">
    <property type="entry name" value="Aldolase_II"/>
    <property type="match status" value="1"/>
</dbReference>
<dbReference type="SUPFAM" id="SSF53639">
    <property type="entry name" value="AraD/HMP-PK domain-like"/>
    <property type="match status" value="1"/>
</dbReference>
<feature type="chain" id="PRO_0000357124" description="Methylthioribulose-1-phosphate dehydratase">
    <location>
        <begin position="1"/>
        <end position="222"/>
    </location>
</feature>
<feature type="binding site" evidence="1">
    <location>
        <position position="94"/>
    </location>
    <ligand>
        <name>Zn(2+)</name>
        <dbReference type="ChEBI" id="CHEBI:29105"/>
    </ligand>
</feature>
<feature type="binding site" evidence="1">
    <location>
        <position position="96"/>
    </location>
    <ligand>
        <name>Zn(2+)</name>
        <dbReference type="ChEBI" id="CHEBI:29105"/>
    </ligand>
</feature>